<keyword id="KW-0002">3D-structure</keyword>
<keyword id="KW-0963">Cytoplasm</keyword>
<keyword id="KW-0903">Direct protein sequencing</keyword>
<keyword id="KW-0479">Metal-binding</keyword>
<keyword id="KW-0520">NAD</keyword>
<keyword id="KW-0560">Oxidoreductase</keyword>
<keyword id="KW-1185">Reference proteome</keyword>
<keyword id="KW-0964">Secreted</keyword>
<keyword id="KW-0862">Zinc</keyword>
<gene>
    <name evidence="4" type="primary">bdhA</name>
    <name type="synonym">ydjL</name>
    <name type="ordered locus">BSU06240</name>
</gene>
<sequence length="346" mass="37341">MKAARWHNQKDIRIEHIEEPKTEPGKVKIKVKWCGICGSDLHEYLGGPIFIPVDKPHPLTNETAPVTMGHEFSGEVVEVGEGVENYKVGDRVVVEPIFATHGHQGAYNLDEQMGFLGLAGGGGGFSEYVSVDEELLFKLPDELSYEQGALVEPSAVALYAVRSSKLKAGDKAAVFGCGPIGLLVIEALKAAGATDIYAVELSPERQQKAEELGAIIVDPSKTDDVVAEIAERTGGGVDVAFEVTGVPVVLRQAIQSTTIAGETVIVSIWEKGAEIHPNDIVIKERTVKGIIGYRDIFPAVLSLMKEGYFSADKLVTKKIVLDDLIEEGFGALIKEKSQVKILVRPN</sequence>
<accession>O34788</accession>
<accession>Q797C2</accession>
<protein>
    <recommendedName>
        <fullName>(R,R)-butanediol dehydrogenase</fullName>
        <ecNumber evidence="7">1.1.1.4</ecNumber>
    </recommendedName>
    <alternativeName>
        <fullName>Acetoin reductase/2,3-butanediol dehydrogenase</fullName>
        <shortName>AR/BDH</shortName>
    </alternativeName>
</protein>
<proteinExistence type="evidence at protein level"/>
<dbReference type="EC" id="1.1.1.4" evidence="7"/>
<dbReference type="EMBL" id="AB007638">
    <property type="protein sequence ID" value="BAA22767.1"/>
    <property type="molecule type" value="Genomic_DNA"/>
</dbReference>
<dbReference type="EMBL" id="AL009126">
    <property type="protein sequence ID" value="CAB12443.1"/>
    <property type="molecule type" value="Genomic_DNA"/>
</dbReference>
<dbReference type="PIR" id="H69789">
    <property type="entry name" value="H69789"/>
</dbReference>
<dbReference type="RefSeq" id="NP_388505.1">
    <property type="nucleotide sequence ID" value="NC_000964.3"/>
</dbReference>
<dbReference type="RefSeq" id="WP_003234015.1">
    <property type="nucleotide sequence ID" value="NZ_OZ025638.1"/>
</dbReference>
<dbReference type="PDB" id="6IE0">
    <property type="method" value="X-ray"/>
    <property type="resolution" value="2.98 A"/>
    <property type="chains" value="A/B/C/D=1-346"/>
</dbReference>
<dbReference type="PDBsum" id="6IE0"/>
<dbReference type="SMR" id="O34788"/>
<dbReference type="FunCoup" id="O34788">
    <property type="interactions" value="44"/>
</dbReference>
<dbReference type="IntAct" id="O34788">
    <property type="interactions" value="1"/>
</dbReference>
<dbReference type="MINT" id="O34788"/>
<dbReference type="STRING" id="224308.BSU06240"/>
<dbReference type="jPOST" id="O34788"/>
<dbReference type="PaxDb" id="224308-BSU06240"/>
<dbReference type="EnsemblBacteria" id="CAB12443">
    <property type="protein sequence ID" value="CAB12443"/>
    <property type="gene ID" value="BSU_06240"/>
</dbReference>
<dbReference type="GeneID" id="86874946"/>
<dbReference type="GeneID" id="939490"/>
<dbReference type="KEGG" id="bsu:BSU06240"/>
<dbReference type="PATRIC" id="fig|224308.179.peg.676"/>
<dbReference type="eggNOG" id="COG1063">
    <property type="taxonomic scope" value="Bacteria"/>
</dbReference>
<dbReference type="InParanoid" id="O34788"/>
<dbReference type="OrthoDB" id="9770238at2"/>
<dbReference type="PhylomeDB" id="O34788"/>
<dbReference type="BioCyc" id="BSUB:BSU06240-MONOMER"/>
<dbReference type="BRENDA" id="1.1.1.4">
    <property type="organism ID" value="658"/>
</dbReference>
<dbReference type="BRENDA" id="1.1.1.B20">
    <property type="organism ID" value="658"/>
</dbReference>
<dbReference type="Proteomes" id="UP000001570">
    <property type="component" value="Chromosome"/>
</dbReference>
<dbReference type="GO" id="GO:0005737">
    <property type="term" value="C:cytoplasm"/>
    <property type="evidence" value="ECO:0007669"/>
    <property type="project" value="UniProtKB-SubCell"/>
</dbReference>
<dbReference type="GO" id="GO:0005576">
    <property type="term" value="C:extracellular region"/>
    <property type="evidence" value="ECO:0007669"/>
    <property type="project" value="UniProtKB-SubCell"/>
</dbReference>
<dbReference type="GO" id="GO:0000721">
    <property type="term" value="F:(R,R)-butanediol dehydrogenase activity"/>
    <property type="evidence" value="ECO:0000315"/>
    <property type="project" value="CACAO"/>
</dbReference>
<dbReference type="GO" id="GO:0008270">
    <property type="term" value="F:zinc ion binding"/>
    <property type="evidence" value="ECO:0007669"/>
    <property type="project" value="InterPro"/>
</dbReference>
<dbReference type="CDD" id="cd08233">
    <property type="entry name" value="butanediol_DH_like"/>
    <property type="match status" value="1"/>
</dbReference>
<dbReference type="FunFam" id="3.40.50.720:FF:000003">
    <property type="entry name" value="S-(hydroxymethyl)glutathione dehydrogenase"/>
    <property type="match status" value="1"/>
</dbReference>
<dbReference type="Gene3D" id="3.90.180.10">
    <property type="entry name" value="Medium-chain alcohol dehydrogenases, catalytic domain"/>
    <property type="match status" value="1"/>
</dbReference>
<dbReference type="Gene3D" id="3.40.50.720">
    <property type="entry name" value="NAD(P)-binding Rossmann-like Domain"/>
    <property type="match status" value="1"/>
</dbReference>
<dbReference type="InterPro" id="IPR013149">
    <property type="entry name" value="ADH-like_C"/>
</dbReference>
<dbReference type="InterPro" id="IPR013154">
    <property type="entry name" value="ADH-like_N"/>
</dbReference>
<dbReference type="InterPro" id="IPR002328">
    <property type="entry name" value="ADH_Zn_CS"/>
</dbReference>
<dbReference type="InterPro" id="IPR011032">
    <property type="entry name" value="GroES-like_sf"/>
</dbReference>
<dbReference type="InterPro" id="IPR036291">
    <property type="entry name" value="NAD(P)-bd_dom_sf"/>
</dbReference>
<dbReference type="InterPro" id="IPR020843">
    <property type="entry name" value="PKS_ER"/>
</dbReference>
<dbReference type="PANTHER" id="PTHR43161:SF26">
    <property type="entry name" value="GALACTITOL 1-PHOSPHATE 5-DEHYDROGENASE"/>
    <property type="match status" value="1"/>
</dbReference>
<dbReference type="PANTHER" id="PTHR43161">
    <property type="entry name" value="SORBITOL DEHYDROGENASE"/>
    <property type="match status" value="1"/>
</dbReference>
<dbReference type="Pfam" id="PF08240">
    <property type="entry name" value="ADH_N"/>
    <property type="match status" value="1"/>
</dbReference>
<dbReference type="Pfam" id="PF00107">
    <property type="entry name" value="ADH_zinc_N"/>
    <property type="match status" value="1"/>
</dbReference>
<dbReference type="SMART" id="SM00829">
    <property type="entry name" value="PKS_ER"/>
    <property type="match status" value="1"/>
</dbReference>
<dbReference type="SUPFAM" id="SSF50129">
    <property type="entry name" value="GroES-like"/>
    <property type="match status" value="1"/>
</dbReference>
<dbReference type="SUPFAM" id="SSF51735">
    <property type="entry name" value="NAD(P)-binding Rossmann-fold domains"/>
    <property type="match status" value="1"/>
</dbReference>
<dbReference type="PROSITE" id="PS00059">
    <property type="entry name" value="ADH_ZINC"/>
    <property type="match status" value="1"/>
</dbReference>
<organism>
    <name type="scientific">Bacillus subtilis (strain 168)</name>
    <dbReference type="NCBI Taxonomy" id="224308"/>
    <lineage>
        <taxon>Bacteria</taxon>
        <taxon>Bacillati</taxon>
        <taxon>Bacillota</taxon>
        <taxon>Bacilli</taxon>
        <taxon>Bacillales</taxon>
        <taxon>Bacillaceae</taxon>
        <taxon>Bacillus</taxon>
    </lineage>
</organism>
<reference key="1">
    <citation type="journal article" date="1997" name="DNA Res.">
        <title>Sequence analysis of the groESL-cotA region of the Bacillus subtilis genome, containing the restriction/modification system genes.</title>
        <authorList>
            <person name="Kasahara Y."/>
            <person name="Nakai S."/>
            <person name="Ogasawara N."/>
            <person name="Yata K."/>
            <person name="Sadaie Y."/>
        </authorList>
    </citation>
    <scope>NUCLEOTIDE SEQUENCE [GENOMIC DNA]</scope>
    <source>
        <strain>168 / Marburg / ATCC 6051 / DSM 10 / JCM 1465 / NBRC 13719 / NCIMB 3610 / NRRL NRS-744 / VKM B-501</strain>
    </source>
</reference>
<reference key="2">
    <citation type="journal article" date="1997" name="Nature">
        <title>The complete genome sequence of the Gram-positive bacterium Bacillus subtilis.</title>
        <authorList>
            <person name="Kunst F."/>
            <person name="Ogasawara N."/>
            <person name="Moszer I."/>
            <person name="Albertini A.M."/>
            <person name="Alloni G."/>
            <person name="Azevedo V."/>
            <person name="Bertero M.G."/>
            <person name="Bessieres P."/>
            <person name="Bolotin A."/>
            <person name="Borchert S."/>
            <person name="Borriss R."/>
            <person name="Boursier L."/>
            <person name="Brans A."/>
            <person name="Braun M."/>
            <person name="Brignell S.C."/>
            <person name="Bron S."/>
            <person name="Brouillet S."/>
            <person name="Bruschi C.V."/>
            <person name="Caldwell B."/>
            <person name="Capuano V."/>
            <person name="Carter N.M."/>
            <person name="Choi S.-K."/>
            <person name="Codani J.-J."/>
            <person name="Connerton I.F."/>
            <person name="Cummings N.J."/>
            <person name="Daniel R.A."/>
            <person name="Denizot F."/>
            <person name="Devine K.M."/>
            <person name="Duesterhoeft A."/>
            <person name="Ehrlich S.D."/>
            <person name="Emmerson P.T."/>
            <person name="Entian K.-D."/>
            <person name="Errington J."/>
            <person name="Fabret C."/>
            <person name="Ferrari E."/>
            <person name="Foulger D."/>
            <person name="Fritz C."/>
            <person name="Fujita M."/>
            <person name="Fujita Y."/>
            <person name="Fuma S."/>
            <person name="Galizzi A."/>
            <person name="Galleron N."/>
            <person name="Ghim S.-Y."/>
            <person name="Glaser P."/>
            <person name="Goffeau A."/>
            <person name="Golightly E.J."/>
            <person name="Grandi G."/>
            <person name="Guiseppi G."/>
            <person name="Guy B.J."/>
            <person name="Haga K."/>
            <person name="Haiech J."/>
            <person name="Harwood C.R."/>
            <person name="Henaut A."/>
            <person name="Hilbert H."/>
            <person name="Holsappel S."/>
            <person name="Hosono S."/>
            <person name="Hullo M.-F."/>
            <person name="Itaya M."/>
            <person name="Jones L.-M."/>
            <person name="Joris B."/>
            <person name="Karamata D."/>
            <person name="Kasahara Y."/>
            <person name="Klaerr-Blanchard M."/>
            <person name="Klein C."/>
            <person name="Kobayashi Y."/>
            <person name="Koetter P."/>
            <person name="Koningstein G."/>
            <person name="Krogh S."/>
            <person name="Kumano M."/>
            <person name="Kurita K."/>
            <person name="Lapidus A."/>
            <person name="Lardinois S."/>
            <person name="Lauber J."/>
            <person name="Lazarevic V."/>
            <person name="Lee S.-M."/>
            <person name="Levine A."/>
            <person name="Liu H."/>
            <person name="Masuda S."/>
            <person name="Mauel C."/>
            <person name="Medigue C."/>
            <person name="Medina N."/>
            <person name="Mellado R.P."/>
            <person name="Mizuno M."/>
            <person name="Moestl D."/>
            <person name="Nakai S."/>
            <person name="Noback M."/>
            <person name="Noone D."/>
            <person name="O'Reilly M."/>
            <person name="Ogawa K."/>
            <person name="Ogiwara A."/>
            <person name="Oudega B."/>
            <person name="Park S.-H."/>
            <person name="Parro V."/>
            <person name="Pohl T.M."/>
            <person name="Portetelle D."/>
            <person name="Porwollik S."/>
            <person name="Prescott A.M."/>
            <person name="Presecan E."/>
            <person name="Pujic P."/>
            <person name="Purnelle B."/>
            <person name="Rapoport G."/>
            <person name="Rey M."/>
            <person name="Reynolds S."/>
            <person name="Rieger M."/>
            <person name="Rivolta C."/>
            <person name="Rocha E."/>
            <person name="Roche B."/>
            <person name="Rose M."/>
            <person name="Sadaie Y."/>
            <person name="Sato T."/>
            <person name="Scanlan E."/>
            <person name="Schleich S."/>
            <person name="Schroeter R."/>
            <person name="Scoffone F."/>
            <person name="Sekiguchi J."/>
            <person name="Sekowska A."/>
            <person name="Seror S.J."/>
            <person name="Serror P."/>
            <person name="Shin B.-S."/>
            <person name="Soldo B."/>
            <person name="Sorokin A."/>
            <person name="Tacconi E."/>
            <person name="Takagi T."/>
            <person name="Takahashi H."/>
            <person name="Takemaru K."/>
            <person name="Takeuchi M."/>
            <person name="Tamakoshi A."/>
            <person name="Tanaka T."/>
            <person name="Terpstra P."/>
            <person name="Tognoni A."/>
            <person name="Tosato V."/>
            <person name="Uchiyama S."/>
            <person name="Vandenbol M."/>
            <person name="Vannier F."/>
            <person name="Vassarotti A."/>
            <person name="Viari A."/>
            <person name="Wambutt R."/>
            <person name="Wedler E."/>
            <person name="Wedler H."/>
            <person name="Weitzenegger T."/>
            <person name="Winters P."/>
            <person name="Wipat A."/>
            <person name="Yamamoto H."/>
            <person name="Yamane K."/>
            <person name="Yasumoto K."/>
            <person name="Yata K."/>
            <person name="Yoshida K."/>
            <person name="Yoshikawa H.-F."/>
            <person name="Zumstein E."/>
            <person name="Yoshikawa H."/>
            <person name="Danchin A."/>
        </authorList>
    </citation>
    <scope>NUCLEOTIDE SEQUENCE [LARGE SCALE GENOMIC DNA]</scope>
    <source>
        <strain>168</strain>
    </source>
</reference>
<reference key="3">
    <citation type="journal article" date="2008" name="Appl. Environ. Microbiol.">
        <title>The Bacillus subtilis ydjL (bdhA) gene encodes acetoin reductase/2,3-butanediol dehydrogenase.</title>
        <authorList>
            <person name="Nicholson W.L."/>
        </authorList>
    </citation>
    <scope>FUNCTION</scope>
    <scope>PROBABLE CATALYTIC ACTIVITY</scope>
    <scope>DISRUPTION PHENOTYPE</scope>
    <source>
        <strain>168</strain>
    </source>
</reference>
<reference key="4">
    <citation type="journal article" date="2011" name="J. Bacteriol.">
        <title>Nonclassical protein secretion by Bacillus subtilis in the stationary phase is not due to cell lysis.</title>
        <authorList>
            <person name="Yang C.K."/>
            <person name="Ewis H.E."/>
            <person name="Zhang X."/>
            <person name="Lu C.D."/>
            <person name="Hu H.J."/>
            <person name="Pan Y."/>
            <person name="Abdelal A.T."/>
            <person name="Tai P.C."/>
        </authorList>
    </citation>
    <scope>PROTEIN SEQUENCE OF N-TERMINUS</scope>
    <scope>SUBCELLULAR LOCATION</scope>
    <source>
        <strain>168 / WB600BHM</strain>
    </source>
</reference>
<reference key="5">
    <citation type="journal article" date="2021" name="Redox Biol.">
        <title>The Bacillus subtilis monothiol bacilliredoxin BrxC (YtxJ) and the Bdr (YpdA) disulfide reductase reduce S-bacillithiolated proteins.</title>
        <authorList>
            <person name="Gaballa A."/>
            <person name="Su T.T."/>
            <person name="Helmann J.D."/>
        </authorList>
    </citation>
    <scope>INTERACTION WITH BRXC</scope>
    <scope>IDENTIFICATION BY MASS SPECTROMETRY</scope>
    <source>
        <strain evidence="5">168 / CU1065</strain>
    </source>
</reference>
<reference evidence="9" key="6">
    <citation type="submission" date="2018-09" db="PDB data bank">
        <title>X-ray crystal structure of 2R,3R-butanediol dehydrogenase from Bacillus subtilis.</title>
        <authorList>
            <person name="Wang X.F."/>
            <person name="Feng Y.B."/>
            <person name="Ji F.L."/>
        </authorList>
    </citation>
    <scope>X-RAY CRYSTALLOGRAPHY (2.98 ANGSTROMS) IN COMPLEX WITH ZINC</scope>
    <scope>SUBUNIT</scope>
</reference>
<name>BDHA_BACSU</name>
<comment type="catalytic activity">
    <reaction evidence="7">
        <text>(R,R)-butane-2,3-diol + NAD(+) = (R)-acetoin + NADH + H(+)</text>
        <dbReference type="Rhea" id="RHEA:24340"/>
        <dbReference type="ChEBI" id="CHEBI:15378"/>
        <dbReference type="ChEBI" id="CHEBI:15686"/>
        <dbReference type="ChEBI" id="CHEBI:16982"/>
        <dbReference type="ChEBI" id="CHEBI:57540"/>
        <dbReference type="ChEBI" id="CHEBI:57945"/>
        <dbReference type="EC" id="1.1.1.4"/>
    </reaction>
</comment>
<comment type="cofactor">
    <cofactor evidence="9">
        <name>Zn(2+)</name>
        <dbReference type="ChEBI" id="CHEBI:29105"/>
    </cofactor>
    <text evidence="9">Binds 1 Zn(2+) per subunit.</text>
</comment>
<comment type="subunit">
    <text evidence="3 8">Homotetramer (Ref.6). Interacts with BrxC (PubMed:33722570).</text>
</comment>
<comment type="subcellular location">
    <subcellularLocation>
        <location evidence="2">Cytoplasm</location>
    </subcellularLocation>
    <subcellularLocation>
        <location evidence="2">Secreted</location>
    </subcellularLocation>
    <text evidence="2">Present in the cytoplasm early in growth, as cells become stationary protein also accumulates in the medium; secreted protein is not processed (PubMed:21856851).</text>
</comment>
<comment type="disruption phenotype">
    <text evidence="1">Cells lacking this gene have no acetoin reductase/2,3-butanediol dehydrogenase activity.</text>
</comment>
<comment type="similarity">
    <text evidence="6">Belongs to the zinc-containing alcohol dehydrogenase family.</text>
</comment>
<evidence type="ECO:0000269" key="1">
    <source>
    </source>
</evidence>
<evidence type="ECO:0000269" key="2">
    <source>
    </source>
</evidence>
<evidence type="ECO:0000269" key="3">
    <source>
    </source>
</evidence>
<evidence type="ECO:0000303" key="4">
    <source>
    </source>
</evidence>
<evidence type="ECO:0000303" key="5">
    <source>
    </source>
</evidence>
<evidence type="ECO:0000305" key="6"/>
<evidence type="ECO:0000305" key="7">
    <source>
    </source>
</evidence>
<evidence type="ECO:0000305" key="8">
    <source ref="6"/>
</evidence>
<evidence type="ECO:0007744" key="9">
    <source>
        <dbReference type="PDB" id="6IE0"/>
    </source>
</evidence>
<evidence type="ECO:0007829" key="10">
    <source>
        <dbReference type="PDB" id="6IE0"/>
    </source>
</evidence>
<feature type="chain" id="PRO_0000378092" description="(R,R)-butanediol dehydrogenase">
    <location>
        <begin position="1"/>
        <end position="346"/>
    </location>
</feature>
<feature type="binding site" evidence="9">
    <location>
        <position position="37"/>
    </location>
    <ligand>
        <name>Zn(2+)</name>
        <dbReference type="ChEBI" id="CHEBI:29105"/>
    </ligand>
</feature>
<feature type="binding site" evidence="9">
    <location>
        <position position="70"/>
    </location>
    <ligand>
        <name>Zn(2+)</name>
        <dbReference type="ChEBI" id="CHEBI:29105"/>
    </ligand>
</feature>
<feature type="binding site" evidence="9">
    <location>
        <position position="152"/>
    </location>
    <ligand>
        <name>Zn(2+)</name>
        <dbReference type="ChEBI" id="CHEBI:29105"/>
    </ligand>
</feature>
<feature type="strand" evidence="10">
    <location>
        <begin position="1"/>
        <end position="8"/>
    </location>
</feature>
<feature type="strand" evidence="10">
    <location>
        <begin position="11"/>
        <end position="17"/>
    </location>
</feature>
<feature type="strand" evidence="10">
    <location>
        <begin position="26"/>
        <end position="35"/>
    </location>
</feature>
<feature type="helix" evidence="10">
    <location>
        <begin position="39"/>
        <end position="46"/>
    </location>
</feature>
<feature type="strand" evidence="10">
    <location>
        <begin position="49"/>
        <end position="51"/>
    </location>
</feature>
<feature type="turn" evidence="10">
    <location>
        <begin position="58"/>
        <end position="60"/>
    </location>
</feature>
<feature type="strand" evidence="10">
    <location>
        <begin position="64"/>
        <end position="67"/>
    </location>
</feature>
<feature type="strand" evidence="10">
    <location>
        <begin position="71"/>
        <end position="79"/>
    </location>
</feature>
<feature type="strand" evidence="10">
    <location>
        <begin position="91"/>
        <end position="94"/>
    </location>
</feature>
<feature type="strand" evidence="10">
    <location>
        <begin position="102"/>
        <end position="106"/>
    </location>
</feature>
<feature type="helix" evidence="10">
    <location>
        <begin position="107"/>
        <end position="109"/>
    </location>
</feature>
<feature type="turn" evidence="10">
    <location>
        <begin position="116"/>
        <end position="118"/>
    </location>
</feature>
<feature type="strand" evidence="10">
    <location>
        <begin position="119"/>
        <end position="121"/>
    </location>
</feature>
<feature type="strand" evidence="10">
    <location>
        <begin position="124"/>
        <end position="132"/>
    </location>
</feature>
<feature type="helix" evidence="10">
    <location>
        <begin position="133"/>
        <end position="135"/>
    </location>
</feature>
<feature type="strand" evidence="10">
    <location>
        <begin position="136"/>
        <end position="138"/>
    </location>
</feature>
<feature type="helix" evidence="10">
    <location>
        <begin position="145"/>
        <end position="149"/>
    </location>
</feature>
<feature type="helix" evidence="10">
    <location>
        <begin position="151"/>
        <end position="162"/>
    </location>
</feature>
<feature type="strand" evidence="10">
    <location>
        <begin position="172"/>
        <end position="175"/>
    </location>
</feature>
<feature type="helix" evidence="10">
    <location>
        <begin position="179"/>
        <end position="190"/>
    </location>
</feature>
<feature type="strand" evidence="10">
    <location>
        <begin position="196"/>
        <end position="199"/>
    </location>
</feature>
<feature type="helix" evidence="10">
    <location>
        <begin position="203"/>
        <end position="211"/>
    </location>
</feature>
<feature type="strand" evidence="10">
    <location>
        <begin position="215"/>
        <end position="217"/>
    </location>
</feature>
<feature type="turn" evidence="10">
    <location>
        <begin position="219"/>
        <end position="221"/>
    </location>
</feature>
<feature type="helix" evidence="10">
    <location>
        <begin position="225"/>
        <end position="233"/>
    </location>
</feature>
<feature type="strand" evidence="10">
    <location>
        <begin position="237"/>
        <end position="242"/>
    </location>
</feature>
<feature type="helix" evidence="10">
    <location>
        <begin position="247"/>
        <end position="255"/>
    </location>
</feature>
<feature type="strand" evidence="10">
    <location>
        <begin position="257"/>
        <end position="265"/>
    </location>
</feature>
<feature type="strand" evidence="10">
    <location>
        <begin position="273"/>
        <end position="275"/>
    </location>
</feature>
<feature type="helix" evidence="10">
    <location>
        <begin position="277"/>
        <end position="282"/>
    </location>
</feature>
<feature type="strand" evidence="10">
    <location>
        <begin position="286"/>
        <end position="289"/>
    </location>
</feature>
<feature type="helix" evidence="10">
    <location>
        <begin position="297"/>
        <end position="304"/>
    </location>
</feature>
<feature type="turn" evidence="10">
    <location>
        <begin position="305"/>
        <end position="309"/>
    </location>
</feature>
<feature type="helix" evidence="10">
    <location>
        <begin position="311"/>
        <end position="314"/>
    </location>
</feature>
<feature type="strand" evidence="10">
    <location>
        <begin position="315"/>
        <end position="320"/>
    </location>
</feature>
<feature type="helix" evidence="10">
    <location>
        <begin position="321"/>
        <end position="323"/>
    </location>
</feature>
<feature type="helix" evidence="10">
    <location>
        <begin position="324"/>
        <end position="327"/>
    </location>
</feature>
<feature type="helix" evidence="10">
    <location>
        <begin position="329"/>
        <end position="334"/>
    </location>
</feature>
<feature type="strand" evidence="10">
    <location>
        <begin position="340"/>
        <end position="344"/>
    </location>
</feature>